<sequence>MSKIVVALGGNALGQSPEEQLELVKGTAKSLVSLIQKGYEVVISHGNGPQVGSINLGLNYAAENGQGPAFPFPECGAMSQAYIGYQLQESLLNELHVLNIDKQVVTLVTQVEVAGDDQAFNNPTKPIGLFYTKEQAEQTMEEKGYKFVEDSGRGYRRVVPSPMPINIVELDSIETLIKHGTLVIAAGGGGIPVVKEEGNYKGVDAVIDKDKTSALLAAHLKSDQLIILTAVDYVYINYGKDNQEALGEVTVDEMNQHIADGQFAKGSMLPKVEAALQFIEKNPEGSVLITSLEDLGDALDGKIGTLIKK</sequence>
<proteinExistence type="inferred from homology"/>
<dbReference type="EC" id="2.7.2.2"/>
<dbReference type="EMBL" id="AP006716">
    <property type="protein sequence ID" value="BAE03568.1"/>
    <property type="status" value="ALT_INIT"/>
    <property type="molecule type" value="Genomic_DNA"/>
</dbReference>
<dbReference type="RefSeq" id="WP_011274588.1">
    <property type="nucleotide sequence ID" value="NC_007168.1"/>
</dbReference>
<dbReference type="SMR" id="Q4L9V7"/>
<dbReference type="KEGG" id="sha:SH0259"/>
<dbReference type="eggNOG" id="COG0549">
    <property type="taxonomic scope" value="Bacteria"/>
</dbReference>
<dbReference type="HOGENOM" id="CLU_076278_0_0_9"/>
<dbReference type="OrthoDB" id="9766717at2"/>
<dbReference type="UniPathway" id="UPA00996">
    <property type="reaction ID" value="UER00366"/>
</dbReference>
<dbReference type="Proteomes" id="UP000000543">
    <property type="component" value="Chromosome"/>
</dbReference>
<dbReference type="GO" id="GO:0005829">
    <property type="term" value="C:cytosol"/>
    <property type="evidence" value="ECO:0007669"/>
    <property type="project" value="TreeGrafter"/>
</dbReference>
<dbReference type="GO" id="GO:0005524">
    <property type="term" value="F:ATP binding"/>
    <property type="evidence" value="ECO:0007669"/>
    <property type="project" value="UniProtKB-KW"/>
</dbReference>
<dbReference type="GO" id="GO:0008804">
    <property type="term" value="F:carbamate kinase activity"/>
    <property type="evidence" value="ECO:0007669"/>
    <property type="project" value="UniProtKB-EC"/>
</dbReference>
<dbReference type="GO" id="GO:0019546">
    <property type="term" value="P:arginine deiminase pathway"/>
    <property type="evidence" value="ECO:0007669"/>
    <property type="project" value="TreeGrafter"/>
</dbReference>
<dbReference type="CDD" id="cd04235">
    <property type="entry name" value="AAK_CK"/>
    <property type="match status" value="1"/>
</dbReference>
<dbReference type="FunFam" id="3.40.1160.10:FF:000007">
    <property type="entry name" value="Carbamate kinase"/>
    <property type="match status" value="1"/>
</dbReference>
<dbReference type="Gene3D" id="3.40.1160.10">
    <property type="entry name" value="Acetylglutamate kinase-like"/>
    <property type="match status" value="1"/>
</dbReference>
<dbReference type="InterPro" id="IPR036393">
    <property type="entry name" value="AceGlu_kinase-like_sf"/>
</dbReference>
<dbReference type="InterPro" id="IPR001048">
    <property type="entry name" value="Asp/Glu/Uridylate_kinase"/>
</dbReference>
<dbReference type="InterPro" id="IPR003964">
    <property type="entry name" value="Carb_kinase"/>
</dbReference>
<dbReference type="NCBIfam" id="TIGR00746">
    <property type="entry name" value="arcC"/>
    <property type="match status" value="1"/>
</dbReference>
<dbReference type="NCBIfam" id="NF009007">
    <property type="entry name" value="PRK12352.1"/>
    <property type="match status" value="1"/>
</dbReference>
<dbReference type="PANTHER" id="PTHR30409">
    <property type="entry name" value="CARBAMATE KINASE"/>
    <property type="match status" value="1"/>
</dbReference>
<dbReference type="PANTHER" id="PTHR30409:SF1">
    <property type="entry name" value="CARBAMATE KINASE-RELATED"/>
    <property type="match status" value="1"/>
</dbReference>
<dbReference type="Pfam" id="PF00696">
    <property type="entry name" value="AA_kinase"/>
    <property type="match status" value="1"/>
</dbReference>
<dbReference type="PIRSF" id="PIRSF000723">
    <property type="entry name" value="Carbamate_kin"/>
    <property type="match status" value="1"/>
</dbReference>
<dbReference type="PRINTS" id="PR01469">
    <property type="entry name" value="CARBMTKINASE"/>
</dbReference>
<dbReference type="SUPFAM" id="SSF53633">
    <property type="entry name" value="Carbamate kinase-like"/>
    <property type="match status" value="1"/>
</dbReference>
<comment type="catalytic activity">
    <reaction>
        <text>hydrogencarbonate + NH4(+) + ATP = carbamoyl phosphate + ADP + H2O + H(+)</text>
        <dbReference type="Rhea" id="RHEA:10152"/>
        <dbReference type="ChEBI" id="CHEBI:15377"/>
        <dbReference type="ChEBI" id="CHEBI:15378"/>
        <dbReference type="ChEBI" id="CHEBI:17544"/>
        <dbReference type="ChEBI" id="CHEBI:28938"/>
        <dbReference type="ChEBI" id="CHEBI:30616"/>
        <dbReference type="ChEBI" id="CHEBI:58228"/>
        <dbReference type="ChEBI" id="CHEBI:456216"/>
        <dbReference type="EC" id="2.7.2.2"/>
    </reaction>
</comment>
<comment type="pathway">
    <text>Metabolic intermediate metabolism; carbamoyl phosphate degradation; CO(2) and NH(3) from carbamoyl phosphate: step 1/1.</text>
</comment>
<comment type="subcellular location">
    <subcellularLocation>
        <location evidence="1">Cytoplasm</location>
    </subcellularLocation>
</comment>
<comment type="similarity">
    <text evidence="1">Belongs to the carbamate kinase family.</text>
</comment>
<comment type="sequence caution" evidence="1">
    <conflict type="erroneous initiation">
        <sequence resource="EMBL-CDS" id="BAE03568"/>
    </conflict>
</comment>
<reference key="1">
    <citation type="journal article" date="2005" name="J. Bacteriol.">
        <title>Whole-genome sequencing of Staphylococcus haemolyticus uncovers the extreme plasticity of its genome and the evolution of human-colonizing staphylococcal species.</title>
        <authorList>
            <person name="Takeuchi F."/>
            <person name="Watanabe S."/>
            <person name="Baba T."/>
            <person name="Yuzawa H."/>
            <person name="Ito T."/>
            <person name="Morimoto Y."/>
            <person name="Kuroda M."/>
            <person name="Cui L."/>
            <person name="Takahashi M."/>
            <person name="Ankai A."/>
            <person name="Baba S."/>
            <person name="Fukui S."/>
            <person name="Lee J.C."/>
            <person name="Hiramatsu K."/>
        </authorList>
    </citation>
    <scope>NUCLEOTIDE SEQUENCE [LARGE SCALE GENOMIC DNA]</scope>
    <source>
        <strain>JCSC1435</strain>
    </source>
</reference>
<organism>
    <name type="scientific">Staphylococcus haemolyticus (strain JCSC1435)</name>
    <dbReference type="NCBI Taxonomy" id="279808"/>
    <lineage>
        <taxon>Bacteria</taxon>
        <taxon>Bacillati</taxon>
        <taxon>Bacillota</taxon>
        <taxon>Bacilli</taxon>
        <taxon>Bacillales</taxon>
        <taxon>Staphylococcaceae</taxon>
        <taxon>Staphylococcus</taxon>
    </lineage>
</organism>
<gene>
    <name type="primary">arcC</name>
    <name type="ordered locus">SH0259</name>
</gene>
<accession>Q4L9V7</accession>
<protein>
    <recommendedName>
        <fullName>Carbamate kinase</fullName>
        <ecNumber>2.7.2.2</ecNumber>
    </recommendedName>
</protein>
<keyword id="KW-0056">Arginine metabolism</keyword>
<keyword id="KW-0067">ATP-binding</keyword>
<keyword id="KW-0963">Cytoplasm</keyword>
<keyword id="KW-0418">Kinase</keyword>
<keyword id="KW-0547">Nucleotide-binding</keyword>
<keyword id="KW-0808">Transferase</keyword>
<feature type="chain" id="PRO_0000269245" description="Carbamate kinase">
    <location>
        <begin position="1"/>
        <end position="309"/>
    </location>
</feature>
<evidence type="ECO:0000305" key="1"/>
<name>ARCC_STAHJ</name>